<sequence length="302" mass="32654">MSEDVVTQPPANLVAGVVKAIRPRQWVKNVLVLAAPLAALGGGVRYDYVEVLSKVSMAFVVFSLAASAVYLVNDVRDVEADREHPTKRFRPIAAGVVPEWLAYTVAVVLGVTSLAGAWMLTPNLALVMVVYLAMQLAYCFGLKHQAVVEICVVSSAYLIRAIAGGVATKIPLSKWFLLIMAFGSLFMVAGKRYAELHLAERTGAAIRKSLESYTSTYLRFVWTLSATAVVLCYGLWAFERDGYSGSWFAVSMIPFTIAILRYAVDVDGGLAGEPEDIALRDRVLQLLALAWIATVGAAVAFG</sequence>
<protein>
    <recommendedName>
        <fullName evidence="6">Decaprenyl-phosphate phosphoribosyltransferase</fullName>
        <ecNumber evidence="1 2 4">2.4.2.45</ecNumber>
    </recommendedName>
    <alternativeName>
        <fullName evidence="5">5-phospho-alpha-D-ribose-1-diphosphate:decaprenyl-phosphate 5-phosphoribosyltransferase</fullName>
    </alternativeName>
    <alternativeName>
        <fullName evidence="5">DPPR synthase</fullName>
    </alternativeName>
</protein>
<keyword id="KW-0002">3D-structure</keyword>
<keyword id="KW-0106">Calcium</keyword>
<keyword id="KW-0997">Cell inner membrane</keyword>
<keyword id="KW-1003">Cell membrane</keyword>
<keyword id="KW-0961">Cell wall biogenesis/degradation</keyword>
<keyword id="KW-0460">Magnesium</keyword>
<keyword id="KW-0464">Manganese</keyword>
<keyword id="KW-0472">Membrane</keyword>
<keyword id="KW-0479">Metal-binding</keyword>
<keyword id="KW-1185">Reference proteome</keyword>
<keyword id="KW-0808">Transferase</keyword>
<keyword id="KW-0812">Transmembrane</keyword>
<keyword id="KW-1133">Transmembrane helix</keyword>
<dbReference type="EC" id="2.4.2.45" evidence="1 2 4"/>
<dbReference type="EMBL" id="AL123456">
    <property type="protein sequence ID" value="CCP46635.1"/>
    <property type="molecule type" value="Genomic_DNA"/>
</dbReference>
<dbReference type="PIR" id="B70888">
    <property type="entry name" value="B70888"/>
</dbReference>
<dbReference type="RefSeq" id="WP_003899704.1">
    <property type="nucleotide sequence ID" value="NZ_NVQJ01000022.1"/>
</dbReference>
<dbReference type="PDB" id="8J8J">
    <property type="method" value="EM"/>
    <property type="resolution" value="2.76 A"/>
    <property type="chains" value="A/B/D=1-302"/>
</dbReference>
<dbReference type="PDB" id="8J8K">
    <property type="method" value="EM"/>
    <property type="resolution" value="3.36 A"/>
    <property type="chains" value="A/B/C=18-302"/>
</dbReference>
<dbReference type="PDBsum" id="8J8J"/>
<dbReference type="PDBsum" id="8J8K"/>
<dbReference type="EMDB" id="EMD-36071"/>
<dbReference type="EMDB" id="EMD-36072"/>
<dbReference type="SMR" id="P9WFR5"/>
<dbReference type="STRING" id="83332.Rv3806c"/>
<dbReference type="PaxDb" id="83332-Rv3806c"/>
<dbReference type="DNASU" id="886129"/>
<dbReference type="KEGG" id="mtu:Rv3806c"/>
<dbReference type="KEGG" id="mtv:RVBD_3806c"/>
<dbReference type="TubercuList" id="Rv3806c"/>
<dbReference type="eggNOG" id="COG0382">
    <property type="taxonomic scope" value="Bacteria"/>
</dbReference>
<dbReference type="InParanoid" id="P9WFR5"/>
<dbReference type="OrthoDB" id="9803632at2"/>
<dbReference type="PhylomeDB" id="P9WFR5"/>
<dbReference type="BioCyc" id="MetaCyc:G185E-8102-MONOMER"/>
<dbReference type="BRENDA" id="2.4.2.45">
    <property type="organism ID" value="3445"/>
</dbReference>
<dbReference type="UniPathway" id="UPA00963"/>
<dbReference type="Proteomes" id="UP000001584">
    <property type="component" value="Chromosome"/>
</dbReference>
<dbReference type="GO" id="GO:0005886">
    <property type="term" value="C:plasma membrane"/>
    <property type="evidence" value="ECO:0007005"/>
    <property type="project" value="MTBBASE"/>
</dbReference>
<dbReference type="GO" id="GO:0052636">
    <property type="term" value="F:arabinosyltransferase activity"/>
    <property type="evidence" value="ECO:0000314"/>
    <property type="project" value="MTBBASE"/>
</dbReference>
<dbReference type="GO" id="GO:0000287">
    <property type="term" value="F:magnesium ion binding"/>
    <property type="evidence" value="ECO:0000314"/>
    <property type="project" value="MTBBASE"/>
</dbReference>
<dbReference type="GO" id="GO:0016740">
    <property type="term" value="F:transferase activity"/>
    <property type="evidence" value="ECO:0000318"/>
    <property type="project" value="GO_Central"/>
</dbReference>
<dbReference type="GO" id="GO:0016765">
    <property type="term" value="F:transferase activity, transferring alkyl or aryl (other than methyl) groups"/>
    <property type="evidence" value="ECO:0007669"/>
    <property type="project" value="InterPro"/>
</dbReference>
<dbReference type="GO" id="GO:0045227">
    <property type="term" value="P:capsule polysaccharide biosynthetic process"/>
    <property type="evidence" value="ECO:0007669"/>
    <property type="project" value="UniProtKB-UniPathway"/>
</dbReference>
<dbReference type="GO" id="GO:0071555">
    <property type="term" value="P:cell wall organization"/>
    <property type="evidence" value="ECO:0007669"/>
    <property type="project" value="UniProtKB-KW"/>
</dbReference>
<dbReference type="GO" id="GO:0009247">
    <property type="term" value="P:glycolipid biosynthetic process"/>
    <property type="evidence" value="ECO:0000315"/>
    <property type="project" value="MTBBASE"/>
</dbReference>
<dbReference type="CDD" id="cd13963">
    <property type="entry name" value="PT_UbiA_2"/>
    <property type="match status" value="1"/>
</dbReference>
<dbReference type="FunFam" id="1.10.357.140:FF:000017">
    <property type="entry name" value="Decaprenyl-phosphate phosphoribosyltransferase"/>
    <property type="match status" value="1"/>
</dbReference>
<dbReference type="Gene3D" id="1.10.357.140">
    <property type="entry name" value="UbiA prenyltransferase"/>
    <property type="match status" value="1"/>
</dbReference>
<dbReference type="InterPro" id="IPR000537">
    <property type="entry name" value="UbiA_prenyltransferase"/>
</dbReference>
<dbReference type="InterPro" id="IPR044878">
    <property type="entry name" value="UbiA_sf"/>
</dbReference>
<dbReference type="NCBIfam" id="NF008976">
    <property type="entry name" value="PRK12324.1-1"/>
    <property type="match status" value="1"/>
</dbReference>
<dbReference type="NCBIfam" id="NF008978">
    <property type="entry name" value="PRK12324.1-4"/>
    <property type="match status" value="1"/>
</dbReference>
<dbReference type="Pfam" id="PF01040">
    <property type="entry name" value="UbiA"/>
    <property type="match status" value="1"/>
</dbReference>
<feature type="chain" id="PRO_0000420587" description="Decaprenyl-phosphate phosphoribosyltransferase">
    <location>
        <begin position="1"/>
        <end position="302"/>
    </location>
</feature>
<feature type="topological domain" description="Cytoplasmic" evidence="4 8 10">
    <location>
        <begin position="1"/>
        <end position="16"/>
    </location>
</feature>
<feature type="transmembrane region" description="Helical" evidence="4 10">
    <location>
        <begin position="17"/>
        <end position="37"/>
    </location>
</feature>
<feature type="topological domain" description="Periplasmic" evidence="4 8 10">
    <location>
        <begin position="38"/>
        <end position="53"/>
    </location>
</feature>
<feature type="transmembrane region" description="Helical" evidence="4 10">
    <location>
        <begin position="54"/>
        <end position="72"/>
    </location>
</feature>
<feature type="topological domain" description="Cytoplasmic" evidence="4 8 10">
    <location>
        <begin position="73"/>
        <end position="100"/>
    </location>
</feature>
<feature type="transmembrane region" description="Helical" evidence="4 10">
    <location>
        <begin position="101"/>
        <end position="117"/>
    </location>
</feature>
<feature type="topological domain" description="Periplasmic" evidence="4 8 10">
    <location>
        <begin position="118"/>
        <end position="122"/>
    </location>
</feature>
<feature type="transmembrane region" description="Helical" evidence="4 10">
    <location>
        <begin position="123"/>
        <end position="139"/>
    </location>
</feature>
<feature type="topological domain" description="Cytoplasmic" evidence="4 8 10">
    <location>
        <begin position="140"/>
        <end position="146"/>
    </location>
</feature>
<feature type="transmembrane region" description="Helical" evidence="4 10">
    <location>
        <begin position="147"/>
        <end position="166"/>
    </location>
</feature>
<feature type="topological domain" description="Periplasmic" evidence="4 8 10">
    <location>
        <begin position="167"/>
        <end position="171"/>
    </location>
</feature>
<feature type="transmembrane region" description="Helical" evidence="4 10">
    <location>
        <begin position="172"/>
        <end position="188"/>
    </location>
</feature>
<feature type="topological domain" description="Cytoplasmic" evidence="4 8 10">
    <location>
        <begin position="189"/>
        <end position="219"/>
    </location>
</feature>
<feature type="transmembrane region" description="Helical" evidence="4 10">
    <location>
        <begin position="220"/>
        <end position="237"/>
    </location>
</feature>
<feature type="topological domain" description="Periplasmic" evidence="4 10">
    <location>
        <begin position="238"/>
        <end position="245"/>
    </location>
</feature>
<feature type="transmembrane region" description="Helical" evidence="4 10">
    <location>
        <begin position="246"/>
        <end position="262"/>
    </location>
</feature>
<feature type="topological domain" description="Cytoplasmic" evidence="4 10">
    <location>
        <begin position="263"/>
        <end position="281"/>
    </location>
</feature>
<feature type="transmembrane region" description="Helical" evidence="4 10">
    <location>
        <begin position="282"/>
        <end position="297"/>
    </location>
</feature>
<feature type="topological domain" description="Periplasmic" evidence="4 10">
    <location>
        <begin position="298"/>
        <end position="302"/>
    </location>
</feature>
<feature type="binding site" evidence="4 10">
    <location>
        <position position="28"/>
    </location>
    <ligand>
        <name>5-phospho-alpha-D-ribose 1-diphosphate</name>
        <dbReference type="ChEBI" id="CHEBI:58017"/>
    </ligand>
</feature>
<feature type="binding site" evidence="4 10">
    <location>
        <position position="70"/>
    </location>
    <ligand>
        <name>5-phospho-alpha-D-ribose 1-diphosphate</name>
        <dbReference type="ChEBI" id="CHEBI:58017"/>
    </ligand>
</feature>
<feature type="binding site" evidence="4 10">
    <location>
        <position position="73"/>
    </location>
    <ligand>
        <name>Mg(2+)</name>
        <dbReference type="ChEBI" id="CHEBI:18420"/>
    </ligand>
</feature>
<feature type="binding site" evidence="4 10">
    <location>
        <position position="77"/>
    </location>
    <ligand>
        <name>Mg(2+)</name>
        <dbReference type="ChEBI" id="CHEBI:18420"/>
    </ligand>
</feature>
<feature type="binding site" evidence="4 10">
    <location>
        <position position="87"/>
    </location>
    <ligand>
        <name>5-phospho-alpha-D-ribose 1-diphosphate</name>
        <dbReference type="ChEBI" id="CHEBI:58017"/>
    </ligand>
</feature>
<feature type="binding site" evidence="4 10">
    <location>
        <position position="143"/>
    </location>
    <ligand>
        <name>5-phospho-alpha-D-ribose 1-diphosphate</name>
        <dbReference type="ChEBI" id="CHEBI:58017"/>
    </ligand>
</feature>
<feature type="binding site" evidence="4 10">
    <location>
        <position position="160"/>
    </location>
    <ligand>
        <name>5-phospho-alpha-D-ribose 1-diphosphate</name>
        <dbReference type="ChEBI" id="CHEBI:58017"/>
    </ligand>
</feature>
<feature type="binding site" evidence="4 11">
    <location>
        <position position="191"/>
    </location>
    <ligand>
        <name>trans,octa-cis-decaprenyl phosphate</name>
        <dbReference type="ChEBI" id="CHEBI:65079"/>
    </ligand>
</feature>
<feature type="mutagenesis site" description="Retains 7% of DPPR synthase activity." evidence="4">
    <original>R</original>
    <variation>A</variation>
    <location>
        <position position="22"/>
    </location>
</feature>
<feature type="mutagenesis site" description="Retains 10% of DPPR synthase activity." evidence="2">
    <original>R</original>
    <variation>L</variation>
    <location>
        <position position="22"/>
    </location>
</feature>
<feature type="mutagenesis site" description="Retains 10% of DPPR synthase activity." evidence="4">
    <original>K</original>
    <variation>A</variation>
    <location>
        <position position="28"/>
    </location>
</feature>
<feature type="mutagenesis site" description="Retains 18% of DPPR synthase activity. 4-fold increase in KM for PRPP while the KM for DP is unaffected." evidence="2">
    <original>N</original>
    <variation>A</variation>
    <location>
        <position position="29"/>
    </location>
</feature>
<feature type="mutagenesis site" description="Retains 94% of DPPR synthase activity." evidence="2">
    <original>F</original>
    <variation>A</variation>
    <location>
        <position position="59"/>
    </location>
</feature>
<feature type="mutagenesis site" description="Retains 72% of DPPR synthase activity." evidence="2">
    <original>F</original>
    <variation>A</variation>
    <location>
        <position position="62"/>
    </location>
</feature>
<feature type="mutagenesis site" description="Loss of DPPR synthase activity. The protein is not expressed in the membrane." evidence="2">
    <original>A</original>
    <variation>F</variation>
    <location>
        <position position="66"/>
    </location>
</feature>
<feature type="mutagenesis site" description="Retains 15% of DPPR synthase activity. According to Huang et al., the mutant protein loses DPPR synthase activity." evidence="2 4">
    <original>Y</original>
    <variation>A</variation>
    <location>
        <position position="70"/>
    </location>
</feature>
<feature type="mutagenesis site" description="Retains 10% of DPPR synthase activity." evidence="4">
    <original>Y</original>
    <variation>F</variation>
    <location>
        <position position="70"/>
    </location>
</feature>
<feature type="mutagenesis site" description="Retains 40% of DPPR synthase activity. According to Huang et al., the mutant protein loses DPPR synthase activity." evidence="2 4">
    <original>N</original>
    <variation>A</variation>
    <location>
        <position position="73"/>
    </location>
</feature>
<feature type="mutagenesis site" description="Retains 15% of DPPR synthase activity. Has a larger effect on the KM for PRPP than on that for DP." evidence="2">
    <original>N</original>
    <variation>Q</variation>
    <location>
        <position position="73"/>
    </location>
</feature>
<feature type="mutagenesis site" description="Loss of DPPR synthase activity." evidence="2">
    <original>D</original>
    <variation>A</variation>
    <location>
        <position position="74"/>
    </location>
</feature>
<feature type="mutagenesis site" description="Retains 18% of DPPR synthase activity. According to Huang et al., the mutant protein is only weakly present in the membrane fraction and loses DPPR synthase activity." evidence="2 4">
    <original>D</original>
    <variation>A</variation>
    <location>
        <position position="77"/>
    </location>
</feature>
<feature type="mutagenesis site" description="Retains 15% of DPPR synthase activity. Strong increase in KM for both PRPP and DP." evidence="2">
    <original>D</original>
    <variation>E</variation>
    <location>
        <position position="77"/>
    </location>
</feature>
<feature type="mutagenesis site" description="Loss of DPPR synthase activity." evidence="2">
    <original>D</original>
    <variation>A</variation>
    <location>
        <position position="81"/>
    </location>
</feature>
<feature type="mutagenesis site" description="Retains 15% of DPPR synthase activity." evidence="2">
    <original>H</original>
    <variation>L</variation>
    <location>
        <position position="84"/>
    </location>
</feature>
<feature type="mutagenesis site" description="Retains 18% of DPPR synthase activity." evidence="4">
    <original>K</original>
    <variation>A</variation>
    <location>
        <position position="87"/>
    </location>
</feature>
<feature type="mutagenesis site" description="Retains 23% of DPPR synthase activity." evidence="4">
    <original>R</original>
    <variation>A</variation>
    <location>
        <position position="90"/>
    </location>
</feature>
<feature type="mutagenesis site" description="Retains 30% of DPPR synthase activity." evidence="4">
    <original>Q</original>
    <variation>A</variation>
    <location>
        <position position="135"/>
    </location>
</feature>
<feature type="mutagenesis site" description="Retains 41% of DPPR synthase activity." evidence="4">
    <original>Y</original>
    <variation>A</variation>
    <location>
        <position position="138"/>
    </location>
</feature>
<feature type="mutagenesis site" description="Retains 85% of DPPR synthase activity." evidence="4">
    <original>Y</original>
    <variation>F</variation>
    <location>
        <position position="138"/>
    </location>
</feature>
<feature type="mutagenesis site" description="Retains 40% of DPPR synthase activity." evidence="4">
    <original>K</original>
    <variation>A</variation>
    <location>
        <position position="143"/>
    </location>
</feature>
<feature type="mutagenesis site" description="Retains 40% of DPPR synthase activity." evidence="4">
    <original>Y</original>
    <variation>A</variation>
    <location>
        <position position="157"/>
    </location>
</feature>
<feature type="mutagenesis site" description="Overexpression leads to higher level of ethambutol resistance and increased decaprenylphosphoryl arabinose levels when compared to wild-type strain." evidence="3">
    <original>K</original>
    <variation>T</variation>
    <location>
        <position position="174"/>
    </location>
</feature>
<feature type="mutagenesis site" description="Overexpression leads to higher level of ethambutol resistance and increased decaprenylphosphoryl arabinose levels when compared to wild-type strain." evidence="3">
    <original>W</original>
    <variation>C</variation>
    <location>
        <position position="175"/>
    </location>
</feature>
<feature type="mutagenesis site" description="Overexpression leads to higher level of ethambutol resistance and increased decaprenylphosphoryl arabinose levels when compared to wild-type strain." evidence="3">
    <original>F</original>
    <variation>L</variation>
    <location>
        <position position="176"/>
    </location>
</feature>
<feature type="mutagenesis site" description="Almost loss of DPPR synthase activity." evidence="4">
    <original>K</original>
    <variation>A</variation>
    <location>
        <position position="191"/>
    </location>
</feature>
<feature type="mutagenesis site" description="Loss of DPPR synthase activity." evidence="2">
    <original>R</original>
    <variation>A</variation>
    <location>
        <position position="192"/>
    </location>
</feature>
<feature type="mutagenesis site" description="Retains 17% of DPPR synthase activity. Strong increase in KM for both PRPP and DP." evidence="2">
    <original>E</original>
    <variation>A</variation>
    <location>
        <position position="195"/>
    </location>
</feature>
<feature type="mutagenesis site" description="Loss of DPPR synthase activity." evidence="2">
    <original>R</original>
    <variation>A</variation>
    <location>
        <position position="201"/>
    </location>
</feature>
<feature type="mutagenesis site" description="Unproperly folded." evidence="4">
    <original>T</original>
    <variation>W</variation>
    <location>
        <position position="227"/>
    </location>
</feature>
<feature type="mutagenesis site" description="Loss of phosphoribosyltransferase activity. Shifts the equilibrium to favor a lower oligomeric state." evidence="4">
    <original>L</original>
    <variation>W</variation>
    <location>
        <position position="231"/>
    </location>
</feature>
<feature type="mutagenesis site" description="Confers higher DPPR turnover rate." evidence="4">
    <original>A</original>
    <variation>G</variation>
    <location>
        <position position="249"/>
    </location>
</feature>
<feature type="helix" evidence="12">
    <location>
        <begin position="14"/>
        <end position="17"/>
    </location>
</feature>
<feature type="turn" evidence="12">
    <location>
        <begin position="18"/>
        <end position="21"/>
    </location>
</feature>
<feature type="helix" evidence="12">
    <location>
        <begin position="23"/>
        <end position="33"/>
    </location>
</feature>
<feature type="helix" evidence="12">
    <location>
        <begin position="34"/>
        <end position="38"/>
    </location>
</feature>
<feature type="turn" evidence="12">
    <location>
        <begin position="39"/>
        <end position="41"/>
    </location>
</feature>
<feature type="helix" evidence="12">
    <location>
        <begin position="50"/>
        <end position="76"/>
    </location>
</feature>
<feature type="turn" evidence="12">
    <location>
        <begin position="77"/>
        <end position="82"/>
    </location>
</feature>
<feature type="turn" evidence="12">
    <location>
        <begin position="85"/>
        <end position="87"/>
    </location>
</feature>
<feature type="turn" evidence="12">
    <location>
        <begin position="91"/>
        <end position="95"/>
    </location>
</feature>
<feature type="turn" evidence="12">
    <location>
        <begin position="99"/>
        <end position="104"/>
    </location>
</feature>
<feature type="helix" evidence="12">
    <location>
        <begin position="105"/>
        <end position="120"/>
    </location>
</feature>
<feature type="helix" evidence="12">
    <location>
        <begin position="124"/>
        <end position="138"/>
    </location>
</feature>
<feature type="turn" evidence="12">
    <location>
        <begin position="139"/>
        <end position="141"/>
    </location>
</feature>
<feature type="helix" evidence="12">
    <location>
        <begin position="142"/>
        <end position="144"/>
    </location>
</feature>
<feature type="strand" evidence="12">
    <location>
        <begin position="145"/>
        <end position="147"/>
    </location>
</feature>
<feature type="helix" evidence="12">
    <location>
        <begin position="148"/>
        <end position="167"/>
    </location>
</feature>
<feature type="helix" evidence="12">
    <location>
        <begin position="174"/>
        <end position="201"/>
    </location>
</feature>
<feature type="helix" evidence="12">
    <location>
        <begin position="210"/>
        <end position="212"/>
    </location>
</feature>
<feature type="helix" evidence="12">
    <location>
        <begin position="215"/>
        <end position="241"/>
    </location>
</feature>
<feature type="strand" evidence="12">
    <location>
        <begin position="242"/>
        <end position="244"/>
    </location>
</feature>
<feature type="helix" evidence="12">
    <location>
        <begin position="247"/>
        <end position="250"/>
    </location>
</feature>
<feature type="helix" evidence="12">
    <location>
        <begin position="252"/>
        <end position="267"/>
    </location>
</feature>
<feature type="helix" evidence="12">
    <location>
        <begin position="274"/>
        <end position="280"/>
    </location>
</feature>
<feature type="helix" evidence="12">
    <location>
        <begin position="282"/>
        <end position="301"/>
    </location>
</feature>
<organism>
    <name type="scientific">Mycobacterium tuberculosis (strain ATCC 25618 / H37Rv)</name>
    <dbReference type="NCBI Taxonomy" id="83332"/>
    <lineage>
        <taxon>Bacteria</taxon>
        <taxon>Bacillati</taxon>
        <taxon>Actinomycetota</taxon>
        <taxon>Actinomycetes</taxon>
        <taxon>Mycobacteriales</taxon>
        <taxon>Mycobacteriaceae</taxon>
        <taxon>Mycobacterium</taxon>
        <taxon>Mycobacterium tuberculosis complex</taxon>
    </lineage>
</organism>
<comment type="function">
    <text evidence="1 2 3 4">Involved in the biosynthesis of decaprenylphosphoryl arabinose (DPA) a precursor for arabinan synthesis in mycobacterial cell wall biosynthesis (PubMed:15878857, PubMed:18310020). Catalyzes the transfer of a 5-phosphoribosyl residue from phosphoribose diphosphate (PRPP) to decaprenyl phosphate (DP) to form decaprenylphosphoryl-5-phosphoribose (DPPR) (PubMed:15878857, PubMed:18310020, PubMed:38491273). The enzyme favors polyprenyl phosphate with 50-60 carbon atoms, is unable to use C-20 polyprenyl phosphate, and uses C-75 polyprenyl phosphate less efficiently than C-50 or C-60 (PubMed:15878857). Cannot use UDP-galactose or GDP-mannose as a sugar donor (PubMed:15878857). May play a role in ethambutol (EMB) resistance (PubMed:25547657).</text>
</comment>
<comment type="catalytic activity">
    <reaction evidence="1 2 4">
        <text>trans,octa-cis-decaprenyl phosphate + 5-phospho-alpha-D-ribose 1-diphosphate + H(+) = trans,octa-cis-decaprenylphospho-beta-D-ribofuranose 5-phosphate + diphosphate</text>
        <dbReference type="Rhea" id="RHEA:34067"/>
        <dbReference type="ChEBI" id="CHEBI:15378"/>
        <dbReference type="ChEBI" id="CHEBI:33019"/>
        <dbReference type="ChEBI" id="CHEBI:58017"/>
        <dbReference type="ChEBI" id="CHEBI:65079"/>
        <dbReference type="ChEBI" id="CHEBI:66937"/>
        <dbReference type="EC" id="2.4.2.45"/>
    </reaction>
    <physiologicalReaction direction="left-to-right" evidence="1 8 9">
        <dbReference type="Rhea" id="RHEA:34068"/>
    </physiologicalReaction>
</comment>
<comment type="cofactor">
    <cofactor evidence="1 4">
        <name>Mg(2+)</name>
        <dbReference type="ChEBI" id="CHEBI:18420"/>
    </cofactor>
    <cofactor evidence="1">
        <name>Mn(2+)</name>
        <dbReference type="ChEBI" id="CHEBI:29035"/>
    </cofactor>
    <cofactor evidence="1">
        <name>Ca(2+)</name>
        <dbReference type="ChEBI" id="CHEBI:29108"/>
    </cofactor>
    <text evidence="1 4">Binds 1 Mg(2+) ion per subunit (PubMed:38491273). Mg(2+) plays an essential role in PRPP binding (PubMed:38491273). Shows lower activity with Mn(2+) and Ca(2+) (PubMed:15878857).</text>
</comment>
<comment type="activity regulation">
    <text evidence="4">Phosphoribosyltransferase activity is not inhibited by ethambutol (EMB), indicating that Rv3806c is not a molecular target of EMB.</text>
</comment>
<comment type="biophysicochemical properties">
    <kinetics>
        <KM evidence="1">22.4 uM for DP (at 37 degrees Celsius)</KM>
        <KM evidence="2">28 uM for DP</KM>
        <KM evidence="1">120 uM for PRPP (at 37 degrees Celsius)</KM>
        <KM evidence="2">43 uM for PRPP</KM>
    </kinetics>
    <phDependence>
        <text evidence="1">Optimum pH is between 7.5 and 8.</text>
    </phDependence>
</comment>
<comment type="pathway">
    <text evidence="7 8">Cell wall biogenesis; cell wall polysaccharide biosynthesis.</text>
</comment>
<comment type="subunit">
    <text evidence="4">Homotrimer.</text>
</comment>
<comment type="subcellular location">
    <subcellularLocation>
        <location evidence="1 2 4">Cell inner membrane</location>
        <topology evidence="4 8">Multi-pass membrane protein</topology>
    </subcellularLocation>
</comment>
<comment type="domain">
    <text evidence="4">Each protomer forms two helical bundles, which, alongside the bound lipids, are required for phosphoribosyltransferase activity in vitro (PubMed:38491273). DP and PRPP bind the intramembrane and extramembrane cavities of Rv3806c, respectively, in a distinct manner to that of UbiA superfamily enzymes (PubMed:38491273). PRPP binding induces conformational changes of the active site (PubMed:38491273).</text>
</comment>
<comment type="miscellaneous">
    <text evidence="3">Overexpression in M.tuberculosis control strain H37Ra leads to ethambutol resistance.</text>
</comment>
<comment type="similarity">
    <text evidence="6">Belongs to the UbiA prenyltransferase family. DPPR synthase subfamily.</text>
</comment>
<evidence type="ECO:0000269" key="1">
    <source>
    </source>
</evidence>
<evidence type="ECO:0000269" key="2">
    <source>
    </source>
</evidence>
<evidence type="ECO:0000269" key="3">
    <source>
    </source>
</evidence>
<evidence type="ECO:0000269" key="4">
    <source>
    </source>
</evidence>
<evidence type="ECO:0000303" key="5">
    <source>
    </source>
</evidence>
<evidence type="ECO:0000305" key="6"/>
<evidence type="ECO:0000305" key="7">
    <source>
    </source>
</evidence>
<evidence type="ECO:0000305" key="8">
    <source>
    </source>
</evidence>
<evidence type="ECO:0000305" key="9">
    <source>
    </source>
</evidence>
<evidence type="ECO:0007744" key="10">
    <source>
        <dbReference type="PDB" id="8J8J"/>
    </source>
</evidence>
<evidence type="ECO:0007744" key="11">
    <source>
        <dbReference type="PDB" id="8J8K"/>
    </source>
</evidence>
<evidence type="ECO:0007829" key="12">
    <source>
        <dbReference type="PDB" id="8J8J"/>
    </source>
</evidence>
<reference key="1">
    <citation type="journal article" date="1998" name="Nature">
        <title>Deciphering the biology of Mycobacterium tuberculosis from the complete genome sequence.</title>
        <authorList>
            <person name="Cole S.T."/>
            <person name="Brosch R."/>
            <person name="Parkhill J."/>
            <person name="Garnier T."/>
            <person name="Churcher C.M."/>
            <person name="Harris D.E."/>
            <person name="Gordon S.V."/>
            <person name="Eiglmeier K."/>
            <person name="Gas S."/>
            <person name="Barry C.E. III"/>
            <person name="Tekaia F."/>
            <person name="Badcock K."/>
            <person name="Basham D."/>
            <person name="Brown D."/>
            <person name="Chillingworth T."/>
            <person name="Connor R."/>
            <person name="Davies R.M."/>
            <person name="Devlin K."/>
            <person name="Feltwell T."/>
            <person name="Gentles S."/>
            <person name="Hamlin N."/>
            <person name="Holroyd S."/>
            <person name="Hornsby T."/>
            <person name="Jagels K."/>
            <person name="Krogh A."/>
            <person name="McLean J."/>
            <person name="Moule S."/>
            <person name="Murphy L.D."/>
            <person name="Oliver S."/>
            <person name="Osborne J."/>
            <person name="Quail M.A."/>
            <person name="Rajandream M.A."/>
            <person name="Rogers J."/>
            <person name="Rutter S."/>
            <person name="Seeger K."/>
            <person name="Skelton S."/>
            <person name="Squares S."/>
            <person name="Squares R."/>
            <person name="Sulston J.E."/>
            <person name="Taylor K."/>
            <person name="Whitehead S."/>
            <person name="Barrell B.G."/>
        </authorList>
    </citation>
    <scope>NUCLEOTIDE SEQUENCE [LARGE SCALE GENOMIC DNA]</scope>
    <source>
        <strain>ATCC 25618 / H37Rv</strain>
    </source>
</reference>
<reference key="2">
    <citation type="journal article" date="2005" name="J. Biol. Chem.">
        <title>Identification and active expression of the Mycobacterium tuberculosis gene encoding 5-phospho-{alpha}-d-ribose-1-diphosphate: decaprenyl-phosphate 5-phosphoribosyltransferase, the first enzyme committed to decaprenylphosphoryl-d-arabinose synthesis.</title>
        <authorList>
            <person name="Huang H."/>
            <person name="Scherman M.S."/>
            <person name="D'Haeze W."/>
            <person name="Vereecke D."/>
            <person name="Holsters M."/>
            <person name="Crick D.C."/>
            <person name="McNeil M.R."/>
        </authorList>
    </citation>
    <scope>FUNCTION</scope>
    <scope>CATALYTIC ACTIVITY</scope>
    <scope>SUBSTRATE SPECIFICITY</scope>
    <scope>BIOPHYSICOCHEMICAL PROPERTIES</scope>
    <scope>COFACTOR</scope>
    <scope>SUBCELLULAR LOCATION</scope>
</reference>
<reference key="3">
    <citation type="journal article" date="2008" name="Microbiology">
        <title>Identification of amino acids and domains required for catalytic activity of DPPR synthase, a cell wall biosynthetic enzyme of Mycobacterium tuberculosis.</title>
        <authorList>
            <person name="Huang H."/>
            <person name="Berg S."/>
            <person name="Spencer J.S."/>
            <person name="Vereecke D."/>
            <person name="D'Haeze W."/>
            <person name="Holsters M."/>
            <person name="McNeil M.R."/>
        </authorList>
    </citation>
    <scope>FUNCTION</scope>
    <scope>CATALYTIC ACTIVITY</scope>
    <scope>BIOPHYSICOCHEMICAL PROPERTIES</scope>
    <scope>SUBCELLULAR LOCATION</scope>
    <scope>PROPOSED TOPOLOGY</scope>
    <scope>MUTAGENESIS OF ARG-22; ASN-29; PHE-59; PHE-62; ALA-66; TYR-70; ASN-73; ASP-74; ASP-77; ASP-81; HIS-84; ARG-192; GLU-195 AND ARG-201</scope>
</reference>
<reference key="4">
    <citation type="journal article" date="2011" name="Mol. Cell. Proteomics">
        <title>Proteogenomic analysis of Mycobacterium tuberculosis by high resolution mass spectrometry.</title>
        <authorList>
            <person name="Kelkar D.S."/>
            <person name="Kumar D."/>
            <person name="Kumar P."/>
            <person name="Balakrishnan L."/>
            <person name="Muthusamy B."/>
            <person name="Yadav A.K."/>
            <person name="Shrivastava P."/>
            <person name="Marimuthu A."/>
            <person name="Anand S."/>
            <person name="Sundaram H."/>
            <person name="Kingsbury R."/>
            <person name="Harsha H.C."/>
            <person name="Nair B."/>
            <person name="Prasad T.S."/>
            <person name="Chauhan D.S."/>
            <person name="Katoch K."/>
            <person name="Katoch V.M."/>
            <person name="Kumar P."/>
            <person name="Chaerkady R."/>
            <person name="Ramachandran S."/>
            <person name="Dash D."/>
            <person name="Pandey A."/>
        </authorList>
    </citation>
    <scope>IDENTIFICATION BY MASS SPECTROMETRY [LARGE SCALE ANALYSIS]</scope>
    <source>
        <strain>ATCC 25618 / H37Rv</strain>
    </source>
</reference>
<reference key="5">
    <citation type="journal article" date="2015" name="Tuberculosis">
        <title>ubiA (Rv3806c) encoding DPPR synthase involved in cell wall synthesis is associated with ethambutol resistance in Mycobacterium tuberculosis.</title>
        <authorList>
            <person name="He L."/>
            <person name="Wang X."/>
            <person name="Cui P."/>
            <person name="Jin J."/>
            <person name="Chen J."/>
            <person name="Zhang W."/>
            <person name="Zhang Y."/>
        </authorList>
    </citation>
    <scope>FUNCTION</scope>
    <scope>OVEREXPRESSION</scope>
    <scope>MUTAGENESIS OF LYS-174; TRP-175 AND PHE-176</scope>
    <source>
        <strain>H37Rv</strain>
    </source>
</reference>
<reference key="6">
    <citation type="journal article" date="2024" name="Nat. Microbiol.">
        <title>Structural analysis of phosphoribosyltransferase-mediated cell wall precursor synthesis in Mycobacterium tuberculosis.</title>
        <authorList>
            <person name="Gao S."/>
            <person name="Wu F."/>
            <person name="Gurcha S.S."/>
            <person name="Batt S.M."/>
            <person name="Besra G.S."/>
            <person name="Rao Z."/>
            <person name="Zhang L."/>
        </authorList>
    </citation>
    <scope>STRUCTURE BY ELECTRON MICROSCOPY (2.76 ANGSTROMS) IN COMPLEXES WITH PHOSPHORIBOSE DIPHOSPHATE; MAGNESIUM IONS AND DECAPRENYL PHOSPHATE</scope>
    <scope>FUNCTION</scope>
    <scope>CATALYTIC ACTIVITY</scope>
    <scope>COFACTOR</scope>
    <scope>ACTIVITY REGULATION</scope>
    <scope>SUBUNIT</scope>
    <scope>SUBCELLULAR LOCATION</scope>
    <scope>DOMAIN</scope>
    <scope>MUTAGENESIS OF ARG-22; LYS-28; TYR-70; ASN-73; ASP-77; LYS-87; ARG-90; GLN-135; TYR-138; LYS-143; TYR-157; LYS-191; THR-227; LEU-231 AND ALA-249</scope>
</reference>
<proteinExistence type="evidence at protein level"/>
<gene>
    <name type="ordered locus">Rv3806c</name>
</gene>
<accession>P9WFR5</accession>
<accession>F2GDG5</accession>
<accession>L0TGT7</accession>
<accession>O53583</accession>
<accession>Q7D4U6</accession>
<name>DPPRS_MYCTU</name>